<name>RL24_ECOHS</name>
<sequence>MAAKIRRDDEVIVLTGKDKGKRGKVKNVLSSGKVIVEGINLVKKHQKPVPALNQPGGIVEKEAAIQVSNVAIFNAATGKADRVGFRFEDGKKVRFFKSNSETIK</sequence>
<comment type="function">
    <text evidence="1">One of two assembly initiator proteins, it binds directly to the 5'-end of the 23S rRNA, where it nucleates assembly of the 50S subunit.</text>
</comment>
<comment type="function">
    <text evidence="1">One of the proteins that surrounds the polypeptide exit tunnel on the outside of the subunit.</text>
</comment>
<comment type="subunit">
    <text evidence="1">Part of the 50S ribosomal subunit.</text>
</comment>
<comment type="similarity">
    <text evidence="1">Belongs to the universal ribosomal protein uL24 family.</text>
</comment>
<proteinExistence type="inferred from homology"/>
<keyword id="KW-0687">Ribonucleoprotein</keyword>
<keyword id="KW-0689">Ribosomal protein</keyword>
<keyword id="KW-0694">RNA-binding</keyword>
<keyword id="KW-0699">rRNA-binding</keyword>
<feature type="chain" id="PRO_1000067580" description="Large ribosomal subunit protein uL24">
    <location>
        <begin position="1"/>
        <end position="104"/>
    </location>
</feature>
<organism>
    <name type="scientific">Escherichia coli O9:H4 (strain HS)</name>
    <dbReference type="NCBI Taxonomy" id="331112"/>
    <lineage>
        <taxon>Bacteria</taxon>
        <taxon>Pseudomonadati</taxon>
        <taxon>Pseudomonadota</taxon>
        <taxon>Gammaproteobacteria</taxon>
        <taxon>Enterobacterales</taxon>
        <taxon>Enterobacteriaceae</taxon>
        <taxon>Escherichia</taxon>
    </lineage>
</organism>
<evidence type="ECO:0000255" key="1">
    <source>
        <dbReference type="HAMAP-Rule" id="MF_01326"/>
    </source>
</evidence>
<evidence type="ECO:0000305" key="2"/>
<reference key="1">
    <citation type="journal article" date="2008" name="J. Bacteriol.">
        <title>The pangenome structure of Escherichia coli: comparative genomic analysis of E. coli commensal and pathogenic isolates.</title>
        <authorList>
            <person name="Rasko D.A."/>
            <person name="Rosovitz M.J."/>
            <person name="Myers G.S.A."/>
            <person name="Mongodin E.F."/>
            <person name="Fricke W.F."/>
            <person name="Gajer P."/>
            <person name="Crabtree J."/>
            <person name="Sebaihia M."/>
            <person name="Thomson N.R."/>
            <person name="Chaudhuri R."/>
            <person name="Henderson I.R."/>
            <person name="Sperandio V."/>
            <person name="Ravel J."/>
        </authorList>
    </citation>
    <scope>NUCLEOTIDE SEQUENCE [LARGE SCALE GENOMIC DNA]</scope>
    <source>
        <strain>HS</strain>
    </source>
</reference>
<dbReference type="EMBL" id="CP000802">
    <property type="protein sequence ID" value="ABV07718.1"/>
    <property type="molecule type" value="Genomic_DNA"/>
</dbReference>
<dbReference type="RefSeq" id="WP_000729185.1">
    <property type="nucleotide sequence ID" value="NC_009800.1"/>
</dbReference>
<dbReference type="SMR" id="A8A5B4"/>
<dbReference type="GeneID" id="93778678"/>
<dbReference type="KEGG" id="ecx:EcHS_A3503"/>
<dbReference type="HOGENOM" id="CLU_093315_2_2_6"/>
<dbReference type="GO" id="GO:0005829">
    <property type="term" value="C:cytosol"/>
    <property type="evidence" value="ECO:0007669"/>
    <property type="project" value="UniProtKB-ARBA"/>
</dbReference>
<dbReference type="GO" id="GO:1990904">
    <property type="term" value="C:ribonucleoprotein complex"/>
    <property type="evidence" value="ECO:0007669"/>
    <property type="project" value="UniProtKB-KW"/>
</dbReference>
<dbReference type="GO" id="GO:0005840">
    <property type="term" value="C:ribosome"/>
    <property type="evidence" value="ECO:0007669"/>
    <property type="project" value="UniProtKB-KW"/>
</dbReference>
<dbReference type="GO" id="GO:0019843">
    <property type="term" value="F:rRNA binding"/>
    <property type="evidence" value="ECO:0007669"/>
    <property type="project" value="UniProtKB-UniRule"/>
</dbReference>
<dbReference type="GO" id="GO:0003735">
    <property type="term" value="F:structural constituent of ribosome"/>
    <property type="evidence" value="ECO:0007669"/>
    <property type="project" value="InterPro"/>
</dbReference>
<dbReference type="GO" id="GO:0006412">
    <property type="term" value="P:translation"/>
    <property type="evidence" value="ECO:0007669"/>
    <property type="project" value="UniProtKB-UniRule"/>
</dbReference>
<dbReference type="CDD" id="cd06089">
    <property type="entry name" value="KOW_RPL26"/>
    <property type="match status" value="1"/>
</dbReference>
<dbReference type="FunFam" id="2.30.30.30:FF:000004">
    <property type="entry name" value="50S ribosomal protein L24"/>
    <property type="match status" value="1"/>
</dbReference>
<dbReference type="Gene3D" id="2.30.30.30">
    <property type="match status" value="1"/>
</dbReference>
<dbReference type="HAMAP" id="MF_01326_B">
    <property type="entry name" value="Ribosomal_uL24_B"/>
    <property type="match status" value="1"/>
</dbReference>
<dbReference type="InterPro" id="IPR005824">
    <property type="entry name" value="KOW"/>
</dbReference>
<dbReference type="InterPro" id="IPR014722">
    <property type="entry name" value="Rib_uL2_dom2"/>
</dbReference>
<dbReference type="InterPro" id="IPR003256">
    <property type="entry name" value="Ribosomal_uL24"/>
</dbReference>
<dbReference type="InterPro" id="IPR005825">
    <property type="entry name" value="Ribosomal_uL24_CS"/>
</dbReference>
<dbReference type="InterPro" id="IPR041988">
    <property type="entry name" value="Ribosomal_uL24_KOW"/>
</dbReference>
<dbReference type="InterPro" id="IPR008991">
    <property type="entry name" value="Translation_prot_SH3-like_sf"/>
</dbReference>
<dbReference type="NCBIfam" id="TIGR01079">
    <property type="entry name" value="rplX_bact"/>
    <property type="match status" value="1"/>
</dbReference>
<dbReference type="PANTHER" id="PTHR12903">
    <property type="entry name" value="MITOCHONDRIAL RIBOSOMAL PROTEIN L24"/>
    <property type="match status" value="1"/>
</dbReference>
<dbReference type="Pfam" id="PF00467">
    <property type="entry name" value="KOW"/>
    <property type="match status" value="1"/>
</dbReference>
<dbReference type="Pfam" id="PF17136">
    <property type="entry name" value="ribosomal_L24"/>
    <property type="match status" value="1"/>
</dbReference>
<dbReference type="SMART" id="SM00739">
    <property type="entry name" value="KOW"/>
    <property type="match status" value="1"/>
</dbReference>
<dbReference type="SUPFAM" id="SSF50104">
    <property type="entry name" value="Translation proteins SH3-like domain"/>
    <property type="match status" value="1"/>
</dbReference>
<dbReference type="PROSITE" id="PS01108">
    <property type="entry name" value="RIBOSOMAL_L24"/>
    <property type="match status" value="1"/>
</dbReference>
<gene>
    <name evidence="1" type="primary">rplX</name>
    <name type="ordered locus">EcHS_A3503</name>
</gene>
<accession>A8A5B4</accession>
<protein>
    <recommendedName>
        <fullName evidence="1">Large ribosomal subunit protein uL24</fullName>
    </recommendedName>
    <alternativeName>
        <fullName evidence="2">50S ribosomal protein L24</fullName>
    </alternativeName>
</protein>